<protein>
    <recommendedName>
        <fullName evidence="1">Small ribosomal subunit protein uS13</fullName>
    </recommendedName>
    <alternativeName>
        <fullName evidence="3">30S ribosomal protein S13</fullName>
    </alternativeName>
</protein>
<accession>Q0AIH4</accession>
<evidence type="ECO:0000255" key="1">
    <source>
        <dbReference type="HAMAP-Rule" id="MF_01315"/>
    </source>
</evidence>
<evidence type="ECO:0000256" key="2">
    <source>
        <dbReference type="SAM" id="MobiDB-lite"/>
    </source>
</evidence>
<evidence type="ECO:0000305" key="3"/>
<organism>
    <name type="scientific">Nitrosomonas eutropha (strain DSM 101675 / C91 / Nm57)</name>
    <dbReference type="NCBI Taxonomy" id="335283"/>
    <lineage>
        <taxon>Bacteria</taxon>
        <taxon>Pseudomonadati</taxon>
        <taxon>Pseudomonadota</taxon>
        <taxon>Betaproteobacteria</taxon>
        <taxon>Nitrosomonadales</taxon>
        <taxon>Nitrosomonadaceae</taxon>
        <taxon>Nitrosomonas</taxon>
    </lineage>
</organism>
<dbReference type="EMBL" id="CP000450">
    <property type="protein sequence ID" value="ABI58852.1"/>
    <property type="molecule type" value="Genomic_DNA"/>
</dbReference>
<dbReference type="RefSeq" id="WP_011633693.1">
    <property type="nucleotide sequence ID" value="NC_008344.1"/>
</dbReference>
<dbReference type="SMR" id="Q0AIH4"/>
<dbReference type="STRING" id="335283.Neut_0580"/>
<dbReference type="KEGG" id="net:Neut_0580"/>
<dbReference type="eggNOG" id="COG0099">
    <property type="taxonomic scope" value="Bacteria"/>
</dbReference>
<dbReference type="HOGENOM" id="CLU_103849_1_2_4"/>
<dbReference type="OrthoDB" id="9803610at2"/>
<dbReference type="Proteomes" id="UP000001966">
    <property type="component" value="Chromosome"/>
</dbReference>
<dbReference type="GO" id="GO:0005829">
    <property type="term" value="C:cytosol"/>
    <property type="evidence" value="ECO:0007669"/>
    <property type="project" value="TreeGrafter"/>
</dbReference>
<dbReference type="GO" id="GO:0015935">
    <property type="term" value="C:small ribosomal subunit"/>
    <property type="evidence" value="ECO:0007669"/>
    <property type="project" value="TreeGrafter"/>
</dbReference>
<dbReference type="GO" id="GO:0019843">
    <property type="term" value="F:rRNA binding"/>
    <property type="evidence" value="ECO:0007669"/>
    <property type="project" value="UniProtKB-UniRule"/>
</dbReference>
<dbReference type="GO" id="GO:0003735">
    <property type="term" value="F:structural constituent of ribosome"/>
    <property type="evidence" value="ECO:0007669"/>
    <property type="project" value="InterPro"/>
</dbReference>
<dbReference type="GO" id="GO:0000049">
    <property type="term" value="F:tRNA binding"/>
    <property type="evidence" value="ECO:0007669"/>
    <property type="project" value="UniProtKB-UniRule"/>
</dbReference>
<dbReference type="GO" id="GO:0006412">
    <property type="term" value="P:translation"/>
    <property type="evidence" value="ECO:0007669"/>
    <property type="project" value="UniProtKB-UniRule"/>
</dbReference>
<dbReference type="FunFam" id="1.10.8.50:FF:000001">
    <property type="entry name" value="30S ribosomal protein S13"/>
    <property type="match status" value="1"/>
</dbReference>
<dbReference type="FunFam" id="4.10.910.10:FF:000001">
    <property type="entry name" value="30S ribosomal protein S13"/>
    <property type="match status" value="1"/>
</dbReference>
<dbReference type="Gene3D" id="1.10.8.50">
    <property type="match status" value="1"/>
</dbReference>
<dbReference type="Gene3D" id="4.10.910.10">
    <property type="entry name" value="30s ribosomal protein s13, domain 2"/>
    <property type="match status" value="1"/>
</dbReference>
<dbReference type="HAMAP" id="MF_01315">
    <property type="entry name" value="Ribosomal_uS13"/>
    <property type="match status" value="1"/>
</dbReference>
<dbReference type="InterPro" id="IPR027437">
    <property type="entry name" value="Rbsml_uS13_C"/>
</dbReference>
<dbReference type="InterPro" id="IPR001892">
    <property type="entry name" value="Ribosomal_uS13"/>
</dbReference>
<dbReference type="InterPro" id="IPR010979">
    <property type="entry name" value="Ribosomal_uS13-like_H2TH"/>
</dbReference>
<dbReference type="InterPro" id="IPR019980">
    <property type="entry name" value="Ribosomal_uS13_bac-type"/>
</dbReference>
<dbReference type="InterPro" id="IPR018269">
    <property type="entry name" value="Ribosomal_uS13_CS"/>
</dbReference>
<dbReference type="NCBIfam" id="TIGR03631">
    <property type="entry name" value="uS13_bact"/>
    <property type="match status" value="1"/>
</dbReference>
<dbReference type="PANTHER" id="PTHR10871">
    <property type="entry name" value="30S RIBOSOMAL PROTEIN S13/40S RIBOSOMAL PROTEIN S18"/>
    <property type="match status" value="1"/>
</dbReference>
<dbReference type="PANTHER" id="PTHR10871:SF1">
    <property type="entry name" value="SMALL RIBOSOMAL SUBUNIT PROTEIN US13M"/>
    <property type="match status" value="1"/>
</dbReference>
<dbReference type="Pfam" id="PF00416">
    <property type="entry name" value="Ribosomal_S13"/>
    <property type="match status" value="1"/>
</dbReference>
<dbReference type="PIRSF" id="PIRSF002134">
    <property type="entry name" value="Ribosomal_S13"/>
    <property type="match status" value="1"/>
</dbReference>
<dbReference type="SUPFAM" id="SSF46946">
    <property type="entry name" value="S13-like H2TH domain"/>
    <property type="match status" value="1"/>
</dbReference>
<dbReference type="PROSITE" id="PS00646">
    <property type="entry name" value="RIBOSOMAL_S13_1"/>
    <property type="match status" value="1"/>
</dbReference>
<dbReference type="PROSITE" id="PS50159">
    <property type="entry name" value="RIBOSOMAL_S13_2"/>
    <property type="match status" value="1"/>
</dbReference>
<reference key="1">
    <citation type="journal article" date="2007" name="Environ. Microbiol.">
        <title>Whole-genome analysis of the ammonia-oxidizing bacterium, Nitrosomonas eutropha C91: implications for niche adaptation.</title>
        <authorList>
            <person name="Stein L.Y."/>
            <person name="Arp D.J."/>
            <person name="Berube P.M."/>
            <person name="Chain P.S."/>
            <person name="Hauser L."/>
            <person name="Jetten M.S."/>
            <person name="Klotz M.G."/>
            <person name="Larimer F.W."/>
            <person name="Norton J.M."/>
            <person name="Op den Camp H.J.M."/>
            <person name="Shin M."/>
            <person name="Wei X."/>
        </authorList>
    </citation>
    <scope>NUCLEOTIDE SEQUENCE [LARGE SCALE GENOMIC DNA]</scope>
    <source>
        <strain>DSM 101675 / C91 / Nm57</strain>
    </source>
</reference>
<sequence length="119" mass="13380">MARIAGVNLPSNKHVNIALTAIYGIGNSTARKICTDLDIPPFIKLKELTDGKLEELRNSIAKLLVEGDLRREVSMNIKRLIDLGSYRGLRHRRGLPVRGQRTKTNARTRKGPRKAIRAR</sequence>
<feature type="chain" id="PRO_0000306663" description="Small ribosomal subunit protein uS13">
    <location>
        <begin position="1"/>
        <end position="119"/>
    </location>
</feature>
<feature type="region of interest" description="Disordered" evidence="2">
    <location>
        <begin position="92"/>
        <end position="119"/>
    </location>
</feature>
<gene>
    <name evidence="1" type="primary">rpsM</name>
    <name type="ordered locus">Neut_0580</name>
</gene>
<keyword id="KW-0687">Ribonucleoprotein</keyword>
<keyword id="KW-0689">Ribosomal protein</keyword>
<keyword id="KW-0694">RNA-binding</keyword>
<keyword id="KW-0699">rRNA-binding</keyword>
<keyword id="KW-0820">tRNA-binding</keyword>
<proteinExistence type="inferred from homology"/>
<comment type="function">
    <text evidence="1">Located at the top of the head of the 30S subunit, it contacts several helices of the 16S rRNA. In the 70S ribosome it contacts the 23S rRNA (bridge B1a) and protein L5 of the 50S subunit (bridge B1b), connecting the 2 subunits; these bridges are implicated in subunit movement. Contacts the tRNAs in the A and P-sites.</text>
</comment>
<comment type="subunit">
    <text evidence="1">Part of the 30S ribosomal subunit. Forms a loose heterodimer with protein S19. Forms two bridges to the 50S subunit in the 70S ribosome.</text>
</comment>
<comment type="similarity">
    <text evidence="1">Belongs to the universal ribosomal protein uS13 family.</text>
</comment>
<name>RS13_NITEC</name>